<gene>
    <name type="ordered locus">AF_0604</name>
</gene>
<name>Y604_ARCFU</name>
<keyword id="KW-1185">Reference proteome</keyword>
<proteinExistence type="predicted"/>
<accession>O29651</accession>
<organism>
    <name type="scientific">Archaeoglobus fulgidus (strain ATCC 49558 / DSM 4304 / JCM 9628 / NBRC 100126 / VC-16)</name>
    <dbReference type="NCBI Taxonomy" id="224325"/>
    <lineage>
        <taxon>Archaea</taxon>
        <taxon>Methanobacteriati</taxon>
        <taxon>Methanobacteriota</taxon>
        <taxon>Archaeoglobi</taxon>
        <taxon>Archaeoglobales</taxon>
        <taxon>Archaeoglobaceae</taxon>
        <taxon>Archaeoglobus</taxon>
    </lineage>
</organism>
<sequence length="120" mass="14587">MPAWMIRNRVGKKLFDGYLVFCFERNPWAKVVSRYLYYKRFDKNFNLSFREFVKSNWIYDALNFPQYTDPLRNYKVIVDFIGYYENLEEDIAKVMKKIGLPEELDVRINTAADDNYRKIL</sequence>
<dbReference type="EMBL" id="AE000782">
    <property type="protein sequence ID" value="AAB90638.1"/>
    <property type="molecule type" value="Genomic_DNA"/>
</dbReference>
<dbReference type="PIR" id="D69325">
    <property type="entry name" value="D69325"/>
</dbReference>
<dbReference type="STRING" id="224325.AF_0604"/>
<dbReference type="PaxDb" id="224325-AF_0604"/>
<dbReference type="EnsemblBacteria" id="AAB90638">
    <property type="protein sequence ID" value="AAB90638"/>
    <property type="gene ID" value="AF_0604"/>
</dbReference>
<dbReference type="KEGG" id="afu:AF_0604"/>
<dbReference type="HOGENOM" id="CLU_144573_0_0_2"/>
<dbReference type="Proteomes" id="UP000002199">
    <property type="component" value="Chromosome"/>
</dbReference>
<dbReference type="InterPro" id="IPR027417">
    <property type="entry name" value="P-loop_NTPase"/>
</dbReference>
<dbReference type="SUPFAM" id="SSF52540">
    <property type="entry name" value="P-loop containing nucleoside triphosphate hydrolases"/>
    <property type="match status" value="1"/>
</dbReference>
<reference key="1">
    <citation type="journal article" date="1997" name="Nature">
        <title>The complete genome sequence of the hyperthermophilic, sulphate-reducing archaeon Archaeoglobus fulgidus.</title>
        <authorList>
            <person name="Klenk H.-P."/>
            <person name="Clayton R.A."/>
            <person name="Tomb J.-F."/>
            <person name="White O."/>
            <person name="Nelson K.E."/>
            <person name="Ketchum K.A."/>
            <person name="Dodson R.J."/>
            <person name="Gwinn M.L."/>
            <person name="Hickey E.K."/>
            <person name="Peterson J.D."/>
            <person name="Richardson D.L."/>
            <person name="Kerlavage A.R."/>
            <person name="Graham D.E."/>
            <person name="Kyrpides N.C."/>
            <person name="Fleischmann R.D."/>
            <person name="Quackenbush J."/>
            <person name="Lee N.H."/>
            <person name="Sutton G.G."/>
            <person name="Gill S.R."/>
            <person name="Kirkness E.F."/>
            <person name="Dougherty B.A."/>
            <person name="McKenney K."/>
            <person name="Adams M.D."/>
            <person name="Loftus B.J."/>
            <person name="Peterson S.N."/>
            <person name="Reich C.I."/>
            <person name="McNeil L.K."/>
            <person name="Badger J.H."/>
            <person name="Glodek A."/>
            <person name="Zhou L."/>
            <person name="Overbeek R."/>
            <person name="Gocayne J.D."/>
            <person name="Weidman J.F."/>
            <person name="McDonald L.A."/>
            <person name="Utterback T.R."/>
            <person name="Cotton M.D."/>
            <person name="Spriggs T."/>
            <person name="Artiach P."/>
            <person name="Kaine B.P."/>
            <person name="Sykes S.M."/>
            <person name="Sadow P.W."/>
            <person name="D'Andrea K.P."/>
            <person name="Bowman C."/>
            <person name="Fujii C."/>
            <person name="Garland S.A."/>
            <person name="Mason T.M."/>
            <person name="Olsen G.J."/>
            <person name="Fraser C.M."/>
            <person name="Smith H.O."/>
            <person name="Woese C.R."/>
            <person name="Venter J.C."/>
        </authorList>
    </citation>
    <scope>NUCLEOTIDE SEQUENCE [LARGE SCALE GENOMIC DNA]</scope>
    <source>
        <strain>ATCC 49558 / DSM 4304 / JCM 9628 / NBRC 100126 / VC-16</strain>
    </source>
</reference>
<feature type="chain" id="PRO_0000127895" description="Uncharacterized protein AF_0604">
    <location>
        <begin position="1"/>
        <end position="120"/>
    </location>
</feature>
<protein>
    <recommendedName>
        <fullName>Uncharacterized protein AF_0604</fullName>
    </recommendedName>
</protein>